<accession>P20850</accession>
<protein>
    <recommendedName>
        <fullName>Collagen alpha-1(IX) chain</fullName>
    </recommendedName>
</protein>
<dbReference type="PIR" id="S02170">
    <property type="entry name" value="S02170"/>
</dbReference>
<dbReference type="ComplexPortal" id="CPX-4103">
    <property type="entry name" value="Collagen type IX trimer"/>
</dbReference>
<dbReference type="FunCoup" id="P20850">
    <property type="interactions" value="2"/>
</dbReference>
<dbReference type="STRING" id="10116.ENSRNOP00000018116"/>
<dbReference type="PhosphoSitePlus" id="P20850"/>
<dbReference type="PaxDb" id="10116-ENSRNOP00000018116"/>
<dbReference type="UCSC" id="RGD:1309425">
    <property type="organism name" value="rat"/>
</dbReference>
<dbReference type="AGR" id="RGD:1309425"/>
<dbReference type="RGD" id="1309425">
    <property type="gene designation" value="Col9a1"/>
</dbReference>
<dbReference type="eggNOG" id="KOG3544">
    <property type="taxonomic scope" value="Eukaryota"/>
</dbReference>
<dbReference type="InParanoid" id="P20850"/>
<dbReference type="PhylomeDB" id="P20850"/>
<dbReference type="Proteomes" id="UP000002494">
    <property type="component" value="Unplaced"/>
</dbReference>
<dbReference type="GO" id="GO:0005594">
    <property type="term" value="C:collagen type IX trimer"/>
    <property type="evidence" value="ECO:0000266"/>
    <property type="project" value="RGD"/>
</dbReference>
<dbReference type="GO" id="GO:0005576">
    <property type="term" value="C:extracellular region"/>
    <property type="evidence" value="ECO:0007669"/>
    <property type="project" value="UniProtKB-KW"/>
</dbReference>
<dbReference type="GO" id="GO:0030246">
    <property type="term" value="F:carbohydrate binding"/>
    <property type="evidence" value="ECO:0000266"/>
    <property type="project" value="RGD"/>
</dbReference>
<dbReference type="GO" id="GO:0046872">
    <property type="term" value="F:metal ion binding"/>
    <property type="evidence" value="ECO:0007669"/>
    <property type="project" value="UniProtKB-KW"/>
</dbReference>
<dbReference type="GO" id="GO:0042803">
    <property type="term" value="F:protein homodimerization activity"/>
    <property type="evidence" value="ECO:0000266"/>
    <property type="project" value="RGD"/>
</dbReference>
<dbReference type="GO" id="GO:0060349">
    <property type="term" value="P:bone morphogenesis"/>
    <property type="evidence" value="ECO:0000266"/>
    <property type="project" value="RGD"/>
</dbReference>
<dbReference type="GO" id="GO:0051216">
    <property type="term" value="P:cartilage development"/>
    <property type="evidence" value="ECO:0000266"/>
    <property type="project" value="RGD"/>
</dbReference>
<dbReference type="GO" id="GO:0002062">
    <property type="term" value="P:chondrocyte differentiation"/>
    <property type="evidence" value="ECO:0000270"/>
    <property type="project" value="RGD"/>
</dbReference>
<dbReference type="GO" id="GO:0035988">
    <property type="term" value="P:chondrocyte proliferation"/>
    <property type="evidence" value="ECO:0000266"/>
    <property type="project" value="RGD"/>
</dbReference>
<dbReference type="GO" id="GO:0003417">
    <property type="term" value="P:growth plate cartilage development"/>
    <property type="evidence" value="ECO:0000266"/>
    <property type="project" value="RGD"/>
</dbReference>
<dbReference type="GO" id="GO:0001501">
    <property type="term" value="P:skeletal system development"/>
    <property type="evidence" value="ECO:0000266"/>
    <property type="project" value="RGD"/>
</dbReference>
<dbReference type="GO" id="GO:0001894">
    <property type="term" value="P:tissue homeostasis"/>
    <property type="evidence" value="ECO:0000266"/>
    <property type="project" value="RGD"/>
</dbReference>
<dbReference type="InterPro" id="IPR008160">
    <property type="entry name" value="Collagen"/>
</dbReference>
<dbReference type="InterPro" id="IPR050149">
    <property type="entry name" value="Collagen_superfamily"/>
</dbReference>
<dbReference type="PANTHER" id="PTHR24023">
    <property type="entry name" value="COLLAGEN ALPHA"/>
    <property type="match status" value="1"/>
</dbReference>
<dbReference type="PANTHER" id="PTHR24023:SF1082">
    <property type="entry name" value="COLLAGEN TRIPLE HELIX REPEAT"/>
    <property type="match status" value="1"/>
</dbReference>
<dbReference type="Pfam" id="PF01391">
    <property type="entry name" value="Collagen"/>
    <property type="match status" value="5"/>
</dbReference>
<name>CO9A1_RAT</name>
<reference key="1">
    <citation type="journal article" date="1989" name="Eur. J. Biochem.">
        <title>Molecular cloning of rat and human type IX collagen cDNA and localization of the alpha 1(IX) gene on the human chromosome 6.</title>
        <authorList>
            <person name="Kimura T."/>
            <person name="Mattei M.-G."/>
            <person name="Stevens J.W."/>
            <person name="Goldring M.B."/>
            <person name="Ninomiya Y."/>
            <person name="Olsen B.R."/>
        </authorList>
    </citation>
    <scope>NUCLEOTIDE SEQUENCE</scope>
</reference>
<organism>
    <name type="scientific">Rattus norvegicus</name>
    <name type="common">Rat</name>
    <dbReference type="NCBI Taxonomy" id="10116"/>
    <lineage>
        <taxon>Eukaryota</taxon>
        <taxon>Metazoa</taxon>
        <taxon>Chordata</taxon>
        <taxon>Craniata</taxon>
        <taxon>Vertebrata</taxon>
        <taxon>Euteleostomi</taxon>
        <taxon>Mammalia</taxon>
        <taxon>Eutheria</taxon>
        <taxon>Euarchontoglires</taxon>
        <taxon>Glires</taxon>
        <taxon>Rodentia</taxon>
        <taxon>Myomorpha</taxon>
        <taxon>Muroidea</taxon>
        <taxon>Muridae</taxon>
        <taxon>Murinae</taxon>
        <taxon>Rattus</taxon>
    </lineage>
</organism>
<proteinExistence type="inferred from homology"/>
<evidence type="ECO:0000250" key="1"/>
<evidence type="ECO:0000256" key="2">
    <source>
        <dbReference type="SAM" id="MobiDB-lite"/>
    </source>
</evidence>
<evidence type="ECO:0000305" key="3"/>
<comment type="function">
    <text>Structural component of hyaline cartilage and vitreous of the eye.</text>
</comment>
<comment type="subunit">
    <text>Heterotrimer of an alpha 1(IX), an alpha 2(IX) and an alpha 3(IX) chain.</text>
</comment>
<comment type="subcellular location">
    <subcellularLocation>
        <location evidence="1">Secreted</location>
        <location evidence="1">Extracellular space</location>
        <location evidence="1">Extracellular matrix</location>
    </subcellularLocation>
</comment>
<comment type="domain">
    <text>Each subunit is composed of three triple-helical domains interspersed with non-collagenous domains. The globular domain at the N-terminus of type IX collagen molecules represents the NC4 domain which may participate in electrostatic interactions with polyanionic glycosaminoglycans in cartilage.</text>
</comment>
<comment type="PTM">
    <text>Covalently linked to the telopeptides of type II collagen by lysine-derived cross-links.</text>
</comment>
<comment type="PTM">
    <text>Prolines at the third position of the tripeptide repeating unit (G-X-Y) are hydroxylated in some or all of the chains.</text>
</comment>
<comment type="similarity">
    <text evidence="3">Belongs to the fibril-associated collagens with interrupted helices (FACIT) family.</text>
</comment>
<feature type="chain" id="PRO_0000059400" description="Collagen alpha-1(IX) chain">
    <location>
        <begin position="1" status="less than"/>
        <end position="325"/>
    </location>
</feature>
<feature type="region of interest" description="Disordered" evidence="2">
    <location>
        <begin position="1"/>
        <end position="163"/>
    </location>
</feature>
<feature type="region of interest" description="Disordered" evidence="2">
    <location>
        <begin position="187"/>
        <end position="325"/>
    </location>
</feature>
<feature type="compositionally biased region" description="Low complexity" evidence="2">
    <location>
        <begin position="1"/>
        <end position="54"/>
    </location>
</feature>
<feature type="compositionally biased region" description="Pro residues" evidence="2">
    <location>
        <begin position="198"/>
        <end position="208"/>
    </location>
</feature>
<feature type="compositionally biased region" description="Basic and acidic residues" evidence="2">
    <location>
        <begin position="237"/>
        <end position="249"/>
    </location>
</feature>
<feature type="compositionally biased region" description="Pro residues" evidence="2">
    <location>
        <begin position="292"/>
        <end position="304"/>
    </location>
</feature>
<feature type="non-terminal residue">
    <location>
        <position position="1"/>
    </location>
</feature>
<keyword id="KW-0176">Collagen</keyword>
<keyword id="KW-0272">Extracellular matrix</keyword>
<keyword id="KW-0379">Hydroxylation</keyword>
<keyword id="KW-0479">Metal-binding</keyword>
<keyword id="KW-1185">Reference proteome</keyword>
<keyword id="KW-0677">Repeat</keyword>
<keyword id="KW-0964">Secreted</keyword>
<keyword id="KW-0862">Zinc</keyword>
<gene>
    <name type="primary">Col9a1</name>
</gene>
<sequence length="325" mass="31256">PGQLGNSGKPGQQGPPGEVGPRGPRGLPGSRGPVGPEGSPGIPGKLGPLGSPGLPGLPGPPGLPGMKGDRGVFGEPGPKGEQGASGEEGEAGVRGDLGDMGQPGPKGSVGNPGEPGLRGPEGIRGLPGVEGPRGPPGPRGVQGEQGATGLPGIQGPPGRAPTDQHIKQVCMRVVQEHFAEMAASLKRPDTGASGLPGRPGPPGPPGPPGENGFPGQMGIRGLPGIKGPPGALGLRGPKGDLGEKGERGPPGRGPKGLPGAIGLPGDPGPASYGKNGRDGEQGPPGVAGIPGVPGPPGPPGPPGFCEPASCTLQAGQRAFSKGPDK</sequence>